<organism>
    <name type="scientific">Saccharomyces cerevisiae (strain JAY291)</name>
    <name type="common">Baker's yeast</name>
    <dbReference type="NCBI Taxonomy" id="574961"/>
    <lineage>
        <taxon>Eukaryota</taxon>
        <taxon>Fungi</taxon>
        <taxon>Dikarya</taxon>
        <taxon>Ascomycota</taxon>
        <taxon>Saccharomycotina</taxon>
        <taxon>Saccharomycetes</taxon>
        <taxon>Saccharomycetales</taxon>
        <taxon>Saccharomycetaceae</taxon>
        <taxon>Saccharomyces</taxon>
    </lineage>
</organism>
<keyword id="KW-0496">Mitochondrion</keyword>
<keyword id="KW-0809">Transit peptide</keyword>
<keyword id="KW-0810">Translation regulation</keyword>
<feature type="transit peptide" description="Mitochondrion" evidence="2">
    <location>
        <begin position="1"/>
        <end position="19"/>
    </location>
</feature>
<feature type="chain" id="PRO_0000405608" description="ATPase expression protein 1, mitochondrial">
    <location>
        <begin position="20"/>
        <end position="518"/>
    </location>
</feature>
<evidence type="ECO:0000250" key="1"/>
<evidence type="ECO:0000255" key="2"/>
<evidence type="ECO:0000305" key="3"/>
<proteinExistence type="inferred from homology"/>
<comment type="function">
    <text evidence="1">Required for translation of the mitochondrial OLI1 transcript encoding subunit 9 of mitochondrial ATP synthase.</text>
</comment>
<comment type="subcellular location">
    <subcellularLocation>
        <location evidence="1">Mitochondrion</location>
    </subcellularLocation>
</comment>
<comment type="similarity">
    <text evidence="3">Belongs to the AEP1 family.</text>
</comment>
<sequence length="518" mass="59756">MITTVQEISKWRNLCFIRMQSRKWYPVLKKTPLVADGRKIIKHADKVPHPEEIIHPFYQPTAIEQFTACATEYNPSLLDGKKIAPSLIKHPVSLKTILVDSKLKFDDIRGVNRWLMEFVARRQHQRNIVLTPASKSVRSFHVLHLSSTDIAKLRGLENILSEIENTNDLQSRVESVNNELQNIFDRDSKQTRLFCEDILAYLIKNYGNSTEKLILLINVTEMQLFSRLDQMKAMNIILYHILCKVEANENPPYSPTLVTALENLLAAINNRFFPGRCENSLHPIVIEQLLSYFIKTGNLNESKNFLGHLIKKGILPEATIINRYLEAIDVHFDKSTKIFDIRSKFAFIADLAPIIENYGTIDLFKFLIPMCRHFDELCSLLNIIRKSNNAKQAVDSTLPIFIKKVLTFTKDPMINSGNLSTVFNIVSPIYGQNVPSEFVEKFILSFALQGNYTMMAHMIDTYKIKLSHKYQLQIIRALKNSERNHALKNTGAVGYNKEFKKYFIEKYLNCTEREALRP</sequence>
<reference key="1">
    <citation type="journal article" date="2009" name="Genome Res.">
        <title>Genome structure of a Saccharomyces cerevisiae strain widely used in bioethanol production.</title>
        <authorList>
            <person name="Argueso J.L."/>
            <person name="Carazzolle M.F."/>
            <person name="Mieczkowski P.A."/>
            <person name="Duarte F.M."/>
            <person name="Netto O.V.C."/>
            <person name="Missawa S.K."/>
            <person name="Galzerani F."/>
            <person name="Costa G.G.L."/>
            <person name="Vidal R.O."/>
            <person name="Noronha M.F."/>
            <person name="Dominska M."/>
            <person name="Andrietta M.G.S."/>
            <person name="Andrietta S.R."/>
            <person name="Cunha A.F."/>
            <person name="Gomes L.H."/>
            <person name="Tavares F.C.A."/>
            <person name="Alcarde A.R."/>
            <person name="Dietrich F.S."/>
            <person name="McCusker J.H."/>
            <person name="Petes T.D."/>
            <person name="Pereira G.A.G."/>
        </authorList>
    </citation>
    <scope>NUCLEOTIDE SEQUENCE [LARGE SCALE GENOMIC DNA]</scope>
    <source>
        <strain>JAY291</strain>
    </source>
</reference>
<dbReference type="EMBL" id="ACFL01000033">
    <property type="protein sequence ID" value="EEU08420.1"/>
    <property type="molecule type" value="Genomic_DNA"/>
</dbReference>
<dbReference type="OrthoDB" id="36478at4893"/>
<dbReference type="Proteomes" id="UP000008073">
    <property type="component" value="Unassembled WGS sequence"/>
</dbReference>
<dbReference type="GO" id="GO:0005739">
    <property type="term" value="C:mitochondrion"/>
    <property type="evidence" value="ECO:0007669"/>
    <property type="project" value="UniProtKB-SubCell"/>
</dbReference>
<dbReference type="GO" id="GO:0045182">
    <property type="term" value="F:translation regulator activity"/>
    <property type="evidence" value="ECO:0007669"/>
    <property type="project" value="InterPro"/>
</dbReference>
<dbReference type="InterPro" id="IPR031467">
    <property type="entry name" value="Aep1"/>
</dbReference>
<dbReference type="Pfam" id="PF17049">
    <property type="entry name" value="AEP1"/>
    <property type="match status" value="1"/>
</dbReference>
<protein>
    <recommendedName>
        <fullName>ATPase expression protein 1, mitochondrial</fullName>
    </recommendedName>
    <alternativeName>
        <fullName>Nuclear control of ATPase messenger RNA expression protein 1</fullName>
    </alternativeName>
</protein>
<accession>C7GL60</accession>
<gene>
    <name type="primary">AEP1</name>
    <name type="synonym">NCA1</name>
    <name type="ORF">C1Q_00968</name>
</gene>
<name>AEP1_YEAS2</name>